<name>SYGB_ACIF5</name>
<comment type="catalytic activity">
    <reaction evidence="1">
        <text>tRNA(Gly) + glycine + ATP = glycyl-tRNA(Gly) + AMP + diphosphate</text>
        <dbReference type="Rhea" id="RHEA:16013"/>
        <dbReference type="Rhea" id="RHEA-COMP:9664"/>
        <dbReference type="Rhea" id="RHEA-COMP:9683"/>
        <dbReference type="ChEBI" id="CHEBI:30616"/>
        <dbReference type="ChEBI" id="CHEBI:33019"/>
        <dbReference type="ChEBI" id="CHEBI:57305"/>
        <dbReference type="ChEBI" id="CHEBI:78442"/>
        <dbReference type="ChEBI" id="CHEBI:78522"/>
        <dbReference type="ChEBI" id="CHEBI:456215"/>
        <dbReference type="EC" id="6.1.1.14"/>
    </reaction>
</comment>
<comment type="subunit">
    <text evidence="1">Tetramer of two alpha and two beta subunits.</text>
</comment>
<comment type="subcellular location">
    <subcellularLocation>
        <location evidence="1">Cytoplasm</location>
    </subcellularLocation>
</comment>
<comment type="similarity">
    <text evidence="1">Belongs to the class-II aminoacyl-tRNA synthetase family.</text>
</comment>
<feature type="chain" id="PRO_1000101257" description="Glycine--tRNA ligase beta subunit">
    <location>
        <begin position="1"/>
        <end position="694"/>
    </location>
</feature>
<proteinExistence type="inferred from homology"/>
<protein>
    <recommendedName>
        <fullName evidence="1">Glycine--tRNA ligase beta subunit</fullName>
        <ecNumber evidence="1">6.1.1.14</ecNumber>
    </recommendedName>
    <alternativeName>
        <fullName evidence="1">Glycyl-tRNA synthetase beta subunit</fullName>
        <shortName evidence="1">GlyRS</shortName>
    </alternativeName>
</protein>
<sequence length="694" mass="76429">MSAPEDLLLELGCEELPAREQMPLQDAATGIIGQLLDAAGLQFGSIHGYVTPRRLALWIKDVSRQSLPQETLRRGPLVARARDAQGKPTAAAEGFARSCGVSLDDLLTLETEKGPVLAWREVGTAQDSHALLPEIASRLVTSLPLRKRMRWGAGSDSFLRPVRWLLLRQGGQVLDWKMFGLDAGGESFGHRVHHPQAVRISTPAGYAGSLLQAKVMVDFAERRAHISGKMAALADEMAVTPILPEALLDEITGLNEWPVVLAGSFAADYLRVPEEALITVMMQHQRYVPLRGRNERLVPHYLFAANLHSRDTQVVIDGNNRVLRARLADAAFFWDQDRQISLQTRRAALAGVLFQDGLGSILDKTVRLQELAAALSPQFAVDAGDMNRAAALCKSDLLSGLVGEFPELQGIMGGHYARHDGENNRVATAIAQHYLPSGRDDEIPADAHGQCLAIADKLDTLCGFFAIGKVPTGDRDPFALRRAALGVLRIVLDAGVPLNLDEAVTRTLAAYGGAFARNRTEIRSAILDFFQDRMRVYFREEGFRADQIAAVLSRQPHEPLDARQRLEALALFQAEHAAADALAALIKRINNLLRKEVISGDWPIDPQYFMDPVENTLWDYWQALEQPLHAQLAERRYTAALGLLAGLRPAVDQFFDGVMVLAEDPVLRQNRLALLARLQEAFLRIADFSQLQGA</sequence>
<gene>
    <name evidence="1" type="primary">glyS</name>
    <name type="ordered locus">Lferr_2210</name>
</gene>
<reference key="1">
    <citation type="submission" date="2008-08" db="EMBL/GenBank/DDBJ databases">
        <title>Complete sequence of Acidithiobacillus ferrooxidans ATCC 53993.</title>
        <authorList>
            <person name="Lucas S."/>
            <person name="Copeland A."/>
            <person name="Lapidus A."/>
            <person name="Glavina del Rio T."/>
            <person name="Dalin E."/>
            <person name="Tice H."/>
            <person name="Bruce D."/>
            <person name="Goodwin L."/>
            <person name="Pitluck S."/>
            <person name="Sims D."/>
            <person name="Brettin T."/>
            <person name="Detter J.C."/>
            <person name="Han C."/>
            <person name="Kuske C.R."/>
            <person name="Larimer F."/>
            <person name="Land M."/>
            <person name="Hauser L."/>
            <person name="Kyrpides N."/>
            <person name="Lykidis A."/>
            <person name="Borole A.P."/>
        </authorList>
    </citation>
    <scope>NUCLEOTIDE SEQUENCE [LARGE SCALE GENOMIC DNA]</scope>
    <source>
        <strain>ATCC 53993 / BNL-5-31</strain>
    </source>
</reference>
<evidence type="ECO:0000255" key="1">
    <source>
        <dbReference type="HAMAP-Rule" id="MF_00255"/>
    </source>
</evidence>
<accession>B5EMS4</accession>
<keyword id="KW-0030">Aminoacyl-tRNA synthetase</keyword>
<keyword id="KW-0067">ATP-binding</keyword>
<keyword id="KW-0963">Cytoplasm</keyword>
<keyword id="KW-0436">Ligase</keyword>
<keyword id="KW-0547">Nucleotide-binding</keyword>
<keyword id="KW-0648">Protein biosynthesis</keyword>
<organism>
    <name type="scientific">Acidithiobacillus ferrooxidans (strain ATCC 53993 / BNL-5-31)</name>
    <name type="common">Leptospirillum ferrooxidans (ATCC 53993)</name>
    <dbReference type="NCBI Taxonomy" id="380394"/>
    <lineage>
        <taxon>Bacteria</taxon>
        <taxon>Pseudomonadati</taxon>
        <taxon>Pseudomonadota</taxon>
        <taxon>Acidithiobacillia</taxon>
        <taxon>Acidithiobacillales</taxon>
        <taxon>Acidithiobacillaceae</taxon>
        <taxon>Acidithiobacillus</taxon>
    </lineage>
</organism>
<dbReference type="EC" id="6.1.1.14" evidence="1"/>
<dbReference type="EMBL" id="CP001132">
    <property type="protein sequence ID" value="ACH84413.1"/>
    <property type="molecule type" value="Genomic_DNA"/>
</dbReference>
<dbReference type="RefSeq" id="WP_012537273.1">
    <property type="nucleotide sequence ID" value="NC_011206.1"/>
</dbReference>
<dbReference type="SMR" id="B5EMS4"/>
<dbReference type="GeneID" id="65281633"/>
<dbReference type="KEGG" id="afe:Lferr_2210"/>
<dbReference type="eggNOG" id="COG0751">
    <property type="taxonomic scope" value="Bacteria"/>
</dbReference>
<dbReference type="HOGENOM" id="CLU_007220_2_2_6"/>
<dbReference type="GO" id="GO:0005829">
    <property type="term" value="C:cytosol"/>
    <property type="evidence" value="ECO:0007669"/>
    <property type="project" value="TreeGrafter"/>
</dbReference>
<dbReference type="GO" id="GO:0004814">
    <property type="term" value="F:arginine-tRNA ligase activity"/>
    <property type="evidence" value="ECO:0007669"/>
    <property type="project" value="InterPro"/>
</dbReference>
<dbReference type="GO" id="GO:0005524">
    <property type="term" value="F:ATP binding"/>
    <property type="evidence" value="ECO:0007669"/>
    <property type="project" value="UniProtKB-UniRule"/>
</dbReference>
<dbReference type="GO" id="GO:0004820">
    <property type="term" value="F:glycine-tRNA ligase activity"/>
    <property type="evidence" value="ECO:0007669"/>
    <property type="project" value="UniProtKB-UniRule"/>
</dbReference>
<dbReference type="GO" id="GO:0006420">
    <property type="term" value="P:arginyl-tRNA aminoacylation"/>
    <property type="evidence" value="ECO:0007669"/>
    <property type="project" value="InterPro"/>
</dbReference>
<dbReference type="GO" id="GO:0006426">
    <property type="term" value="P:glycyl-tRNA aminoacylation"/>
    <property type="evidence" value="ECO:0007669"/>
    <property type="project" value="UniProtKB-UniRule"/>
</dbReference>
<dbReference type="HAMAP" id="MF_00255">
    <property type="entry name" value="Gly_tRNA_synth_beta"/>
    <property type="match status" value="1"/>
</dbReference>
<dbReference type="InterPro" id="IPR008909">
    <property type="entry name" value="DALR_anticod-bd"/>
</dbReference>
<dbReference type="InterPro" id="IPR015944">
    <property type="entry name" value="Gly-tRNA-synth_bsu"/>
</dbReference>
<dbReference type="InterPro" id="IPR006194">
    <property type="entry name" value="Gly-tRNA-synth_heterodimer"/>
</dbReference>
<dbReference type="NCBIfam" id="TIGR00211">
    <property type="entry name" value="glyS"/>
    <property type="match status" value="1"/>
</dbReference>
<dbReference type="PANTHER" id="PTHR30075:SF2">
    <property type="entry name" value="GLYCINE--TRNA LIGASE, CHLOROPLASTIC_MITOCHONDRIAL 2"/>
    <property type="match status" value="1"/>
</dbReference>
<dbReference type="PANTHER" id="PTHR30075">
    <property type="entry name" value="GLYCYL-TRNA SYNTHETASE"/>
    <property type="match status" value="1"/>
</dbReference>
<dbReference type="Pfam" id="PF05746">
    <property type="entry name" value="DALR_1"/>
    <property type="match status" value="1"/>
</dbReference>
<dbReference type="Pfam" id="PF02092">
    <property type="entry name" value="tRNA_synt_2f"/>
    <property type="match status" value="1"/>
</dbReference>
<dbReference type="PRINTS" id="PR01045">
    <property type="entry name" value="TRNASYNTHGB"/>
</dbReference>
<dbReference type="SUPFAM" id="SSF109604">
    <property type="entry name" value="HD-domain/PDEase-like"/>
    <property type="match status" value="1"/>
</dbReference>
<dbReference type="PROSITE" id="PS50861">
    <property type="entry name" value="AA_TRNA_LIGASE_II_GLYAB"/>
    <property type="match status" value="1"/>
</dbReference>